<organism>
    <name type="scientific">Streptomyces coelicolor (strain ATCC BAA-471 / A3(2) / M145)</name>
    <dbReference type="NCBI Taxonomy" id="100226"/>
    <lineage>
        <taxon>Bacteria</taxon>
        <taxon>Bacillati</taxon>
        <taxon>Actinomycetota</taxon>
        <taxon>Actinomycetes</taxon>
        <taxon>Kitasatosporales</taxon>
        <taxon>Streptomycetaceae</taxon>
        <taxon>Streptomyces</taxon>
        <taxon>Streptomyces albidoflavus group</taxon>
    </lineage>
</organism>
<proteinExistence type="inferred from homology"/>
<reference key="1">
    <citation type="journal article" date="2002" name="Nature">
        <title>Complete genome sequence of the model actinomycete Streptomyces coelicolor A3(2).</title>
        <authorList>
            <person name="Bentley S.D."/>
            <person name="Chater K.F."/>
            <person name="Cerdeno-Tarraga A.-M."/>
            <person name="Challis G.L."/>
            <person name="Thomson N.R."/>
            <person name="James K.D."/>
            <person name="Harris D.E."/>
            <person name="Quail M.A."/>
            <person name="Kieser H."/>
            <person name="Harper D."/>
            <person name="Bateman A."/>
            <person name="Brown S."/>
            <person name="Chandra G."/>
            <person name="Chen C.W."/>
            <person name="Collins M."/>
            <person name="Cronin A."/>
            <person name="Fraser A."/>
            <person name="Goble A."/>
            <person name="Hidalgo J."/>
            <person name="Hornsby T."/>
            <person name="Howarth S."/>
            <person name="Huang C.-H."/>
            <person name="Kieser T."/>
            <person name="Larke L."/>
            <person name="Murphy L.D."/>
            <person name="Oliver K."/>
            <person name="O'Neil S."/>
            <person name="Rabbinowitsch E."/>
            <person name="Rajandream M.A."/>
            <person name="Rutherford K.M."/>
            <person name="Rutter S."/>
            <person name="Seeger K."/>
            <person name="Saunders D."/>
            <person name="Sharp S."/>
            <person name="Squares R."/>
            <person name="Squares S."/>
            <person name="Taylor K."/>
            <person name="Warren T."/>
            <person name="Wietzorrek A."/>
            <person name="Woodward J.R."/>
            <person name="Barrell B.G."/>
            <person name="Parkhill J."/>
            <person name="Hopwood D.A."/>
        </authorList>
    </citation>
    <scope>NUCLEOTIDE SEQUENCE [LARGE SCALE GENOMIC DNA]</scope>
    <source>
        <strain>ATCC BAA-471 / A3(2) / M145</strain>
    </source>
</reference>
<keyword id="KW-0963">Cytoplasm</keyword>
<keyword id="KW-0378">Hydrolase</keyword>
<keyword id="KW-0479">Metal-binding</keyword>
<keyword id="KW-0533">Nickel</keyword>
<keyword id="KW-1185">Reference proteome</keyword>
<protein>
    <recommendedName>
        <fullName evidence="1">Urease subunit alpha 2</fullName>
        <ecNumber evidence="1">3.5.1.5</ecNumber>
    </recommendedName>
    <alternativeName>
        <fullName evidence="1">Urea amidohydrolase subunit alpha 2</fullName>
    </alternativeName>
</protein>
<comment type="catalytic activity">
    <reaction evidence="1">
        <text>urea + 2 H2O + H(+) = hydrogencarbonate + 2 NH4(+)</text>
        <dbReference type="Rhea" id="RHEA:20557"/>
        <dbReference type="ChEBI" id="CHEBI:15377"/>
        <dbReference type="ChEBI" id="CHEBI:15378"/>
        <dbReference type="ChEBI" id="CHEBI:16199"/>
        <dbReference type="ChEBI" id="CHEBI:17544"/>
        <dbReference type="ChEBI" id="CHEBI:28938"/>
        <dbReference type="EC" id="3.5.1.5"/>
    </reaction>
</comment>
<comment type="cofactor">
    <cofactor evidence="1">
        <name>Ni cation</name>
        <dbReference type="ChEBI" id="CHEBI:25516"/>
    </cofactor>
    <text evidence="1">Binds 2 nickel ions per subunit.</text>
</comment>
<comment type="pathway">
    <text evidence="1">Nitrogen metabolism; urea degradation; CO(2) and NH(3) from urea (urease route): step 1/1.</text>
</comment>
<comment type="subunit">
    <text evidence="1">May form a heterohexamer of 3 UreC (alpha) and 3 UreAB (gamma/beta) subunits. May also form a heterotrimer of UreA (gamma), UreB (beta) and UreC (alpha) subunits. Three heterotrimers associate to form the active enzyme.</text>
</comment>
<comment type="subcellular location">
    <subcellularLocation>
        <location evidence="1">Cytoplasm</location>
    </subcellularLocation>
</comment>
<comment type="PTM">
    <text evidence="1">Carboxylation allows a single lysine to coordinate two nickel ions.</text>
</comment>
<comment type="similarity">
    <text evidence="1">Belongs to the metallo-dependent hydrolases superfamily. Urease alpha subunit family.</text>
</comment>
<evidence type="ECO:0000255" key="1">
    <source>
        <dbReference type="HAMAP-Rule" id="MF_01953"/>
    </source>
</evidence>
<gene>
    <name evidence="1" type="primary">ureC2</name>
    <name type="ordered locus">SCO5526</name>
    <name type="ORF">SC1C2.07</name>
</gene>
<dbReference type="EC" id="3.5.1.5" evidence="1"/>
<dbReference type="EMBL" id="AL939124">
    <property type="protein sequence ID" value="CAA19974.1"/>
    <property type="molecule type" value="Genomic_DNA"/>
</dbReference>
<dbReference type="PIR" id="T29056">
    <property type="entry name" value="T29056"/>
</dbReference>
<dbReference type="RefSeq" id="NP_629660.1">
    <property type="nucleotide sequence ID" value="NC_003888.3"/>
</dbReference>
<dbReference type="RefSeq" id="WP_011030294.1">
    <property type="nucleotide sequence ID" value="NZ_VNID01000011.1"/>
</dbReference>
<dbReference type="SMR" id="O86508"/>
<dbReference type="STRING" id="100226.gene:17763178"/>
<dbReference type="PaxDb" id="100226-SCO5526"/>
<dbReference type="KEGG" id="sco:SCO5526"/>
<dbReference type="PATRIC" id="fig|100226.15.peg.5613"/>
<dbReference type="eggNOG" id="COG0804">
    <property type="taxonomic scope" value="Bacteria"/>
</dbReference>
<dbReference type="HOGENOM" id="CLU_000980_2_0_11"/>
<dbReference type="InParanoid" id="O86508"/>
<dbReference type="OrthoDB" id="9802793at2"/>
<dbReference type="PhylomeDB" id="O86508"/>
<dbReference type="UniPathway" id="UPA00258">
    <property type="reaction ID" value="UER00370"/>
</dbReference>
<dbReference type="Proteomes" id="UP000001973">
    <property type="component" value="Chromosome"/>
</dbReference>
<dbReference type="GO" id="GO:0005737">
    <property type="term" value="C:cytoplasm"/>
    <property type="evidence" value="ECO:0007669"/>
    <property type="project" value="UniProtKB-SubCell"/>
</dbReference>
<dbReference type="GO" id="GO:0016151">
    <property type="term" value="F:nickel cation binding"/>
    <property type="evidence" value="ECO:0007669"/>
    <property type="project" value="UniProtKB-UniRule"/>
</dbReference>
<dbReference type="GO" id="GO:0009039">
    <property type="term" value="F:urease activity"/>
    <property type="evidence" value="ECO:0007669"/>
    <property type="project" value="UniProtKB-UniRule"/>
</dbReference>
<dbReference type="GO" id="GO:0043419">
    <property type="term" value="P:urea catabolic process"/>
    <property type="evidence" value="ECO:0007669"/>
    <property type="project" value="UniProtKB-UniRule"/>
</dbReference>
<dbReference type="Gene3D" id="3.20.20.140">
    <property type="entry name" value="Metal-dependent hydrolases"/>
    <property type="match status" value="1"/>
</dbReference>
<dbReference type="Gene3D" id="2.30.40.10">
    <property type="entry name" value="Urease, subunit C, domain 1"/>
    <property type="match status" value="1"/>
</dbReference>
<dbReference type="HAMAP" id="MF_01953">
    <property type="entry name" value="Urease_alpha"/>
    <property type="match status" value="1"/>
</dbReference>
<dbReference type="InterPro" id="IPR006680">
    <property type="entry name" value="Amidohydro-rel"/>
</dbReference>
<dbReference type="InterPro" id="IPR011059">
    <property type="entry name" value="Metal-dep_hydrolase_composite"/>
</dbReference>
<dbReference type="InterPro" id="IPR032466">
    <property type="entry name" value="Metal_Hydrolase"/>
</dbReference>
<dbReference type="InterPro" id="IPR011612">
    <property type="entry name" value="Urease_alpha_N_dom"/>
</dbReference>
<dbReference type="InterPro" id="IPR050112">
    <property type="entry name" value="Urease_alpha_subunit"/>
</dbReference>
<dbReference type="InterPro" id="IPR005848">
    <property type="entry name" value="Urease_asu"/>
</dbReference>
<dbReference type="InterPro" id="IPR017951">
    <property type="entry name" value="Urease_asu_c"/>
</dbReference>
<dbReference type="InterPro" id="IPR029754">
    <property type="entry name" value="Urease_Ni-bd"/>
</dbReference>
<dbReference type="NCBIfam" id="NF009686">
    <property type="entry name" value="PRK13207.1"/>
    <property type="match status" value="1"/>
</dbReference>
<dbReference type="PANTHER" id="PTHR43440">
    <property type="entry name" value="UREASE"/>
    <property type="match status" value="1"/>
</dbReference>
<dbReference type="PANTHER" id="PTHR43440:SF1">
    <property type="entry name" value="UREASE"/>
    <property type="match status" value="1"/>
</dbReference>
<dbReference type="Pfam" id="PF01979">
    <property type="entry name" value="Amidohydro_1"/>
    <property type="match status" value="1"/>
</dbReference>
<dbReference type="Pfam" id="PF00449">
    <property type="entry name" value="Urease_alpha"/>
    <property type="match status" value="1"/>
</dbReference>
<dbReference type="PRINTS" id="PR01752">
    <property type="entry name" value="UREASE"/>
</dbReference>
<dbReference type="SUPFAM" id="SSF51338">
    <property type="entry name" value="Composite domain of metallo-dependent hydrolases"/>
    <property type="match status" value="1"/>
</dbReference>
<dbReference type="SUPFAM" id="SSF51556">
    <property type="entry name" value="Metallo-dependent hydrolases"/>
    <property type="match status" value="1"/>
</dbReference>
<dbReference type="PROSITE" id="PS01120">
    <property type="entry name" value="UREASE_1"/>
    <property type="match status" value="1"/>
</dbReference>
<dbReference type="PROSITE" id="PS51368">
    <property type="entry name" value="UREASE_3"/>
    <property type="match status" value="1"/>
</dbReference>
<accession>O86508</accession>
<feature type="chain" id="PRO_0000234188" description="Urease subunit alpha 2">
    <location>
        <begin position="1"/>
        <end position="558"/>
    </location>
</feature>
<feature type="domain" description="Urease" evidence="1">
    <location>
        <begin position="129"/>
        <end position="558"/>
    </location>
</feature>
<feature type="active site" description="Proton donor" evidence="1">
    <location>
        <position position="317"/>
    </location>
</feature>
<feature type="binding site" evidence="1">
    <location>
        <position position="134"/>
    </location>
    <ligand>
        <name>Ni(2+)</name>
        <dbReference type="ChEBI" id="CHEBI:49786"/>
        <label>1</label>
    </ligand>
</feature>
<feature type="binding site" evidence="1">
    <location>
        <position position="136"/>
    </location>
    <ligand>
        <name>Ni(2+)</name>
        <dbReference type="ChEBI" id="CHEBI:49786"/>
        <label>1</label>
    </ligand>
</feature>
<feature type="binding site" description="via carbamate group" evidence="1">
    <location>
        <position position="214"/>
    </location>
    <ligand>
        <name>Ni(2+)</name>
        <dbReference type="ChEBI" id="CHEBI:49786"/>
        <label>1</label>
    </ligand>
</feature>
<feature type="binding site" description="via carbamate group" evidence="1">
    <location>
        <position position="214"/>
    </location>
    <ligand>
        <name>Ni(2+)</name>
        <dbReference type="ChEBI" id="CHEBI:49786"/>
        <label>2</label>
    </ligand>
</feature>
<feature type="binding site" evidence="1">
    <location>
        <position position="216"/>
    </location>
    <ligand>
        <name>substrate</name>
    </ligand>
</feature>
<feature type="binding site" evidence="1">
    <location>
        <position position="243"/>
    </location>
    <ligand>
        <name>Ni(2+)</name>
        <dbReference type="ChEBI" id="CHEBI:49786"/>
        <label>2</label>
    </ligand>
</feature>
<feature type="binding site" evidence="1">
    <location>
        <position position="269"/>
    </location>
    <ligand>
        <name>Ni(2+)</name>
        <dbReference type="ChEBI" id="CHEBI:49786"/>
        <label>2</label>
    </ligand>
</feature>
<feature type="binding site" evidence="1">
    <location>
        <position position="357"/>
    </location>
    <ligand>
        <name>Ni(2+)</name>
        <dbReference type="ChEBI" id="CHEBI:49786"/>
        <label>1</label>
    </ligand>
</feature>
<feature type="modified residue" description="N6-carboxylysine" evidence="1">
    <location>
        <position position="214"/>
    </location>
</feature>
<name>URE12_STRCO</name>
<sequence length="558" mass="58351">MTIDPYAYAAAHGPRAGDRLRLGDSGLVIRVESDAQHYGDEFLAGFGKTARDGLHLKAAAVRDTCDVVISNVVVIDAVQGIRKVSIGIREGRVHAIGRAGNPDTLDGVDVVVGTGTSIVSGEGLIATAGAVDTHVHLLSPRIMEASLASGVTTIIGQEFGPVWGVGVNSPWALKHAFGAFDAWPVNIGFLGRGSSSHEAPLIEALAEGGASGFKVHEDMGAHTRALDTALRVAEEHDVQVALHSDGLNECLSVEDTLRVLDGRTIHAFHIEGCGGGHVPNVLKMAGVPHVIGSSTNPTLPFGRDAVAEHYGMIVSVHDLKTDLPGDAAMARDRIRAGTMGAEDVLHDLGAIGITSSDAQGMGRAGETVRRTFAMAGKMKAQFGAEGDDDNARVLRYIAKLTINPALAHGLAHEVGSIEVGKLADLVLWRPDHFGAKPQLVLKSGFPAYGVVGDPNAATDTCEPLVLGPQFGAHGATPAEISVAFVAQAALDQGGDTMPTRRRRVAVRGTRGIGPADLRLNSRTGAVDVDQRTGLVTLDGDPLRSEPAESVSLNRLYFL</sequence>